<sequence>MNRFTTSQGAFELARFPEHPRDPFRAWDAADDYLLQQLTDPGTGPVDLSGTVAVVGDRWGALATALAAHRPVQISDSYLARRATLANLARNGIDEDAVRLLSSRDTPPDRIDVLLVRVPKSLAFLEDQLHRLAPAVHSGTVVIGTGMVKEIHTSTLKIFERIIGPTRTSLAVRKARLIFSTPDPALPRTLSPWPYRYELPADVGPVAGLTAVNHAGIFCAERLDIGTRFFLKHLPTRSGAVRVVDLGCGNGVLGLSAAVANPDAHLTFVDESYGAVASAEETFRAGAPAGAKADFLVGDGLADLDPGSVDLVLNNPPFHSHLATTDATARTMFAGAKTALRRGGELWVVGNRHLSYHTHLRRIFGNCTTVAGDPKFVVLRAVKR</sequence>
<feature type="chain" id="PRO_0000366529" description="Ribosomal RNA large subunit methyltransferase G">
    <location>
        <begin position="1"/>
        <end position="384"/>
    </location>
</feature>
<gene>
    <name evidence="1" type="primary">rlmG</name>
    <name type="ordered locus">SGR_6774</name>
</gene>
<protein>
    <recommendedName>
        <fullName evidence="1">Ribosomal RNA large subunit methyltransferase G</fullName>
        <ecNumber evidence="1">2.1.1.174</ecNumber>
    </recommendedName>
    <alternativeName>
        <fullName evidence="1">23S rRNA m2G1835 methyltransferase</fullName>
    </alternativeName>
    <alternativeName>
        <fullName evidence="1">rRNA (guanine-N(2)-)-methyltransferase RlmG</fullName>
    </alternativeName>
</protein>
<organism>
    <name type="scientific">Streptomyces griseus subsp. griseus (strain JCM 4626 / CBS 651.72 / NBRC 13350 / KCC S-0626 / ISP 5235)</name>
    <dbReference type="NCBI Taxonomy" id="455632"/>
    <lineage>
        <taxon>Bacteria</taxon>
        <taxon>Bacillati</taxon>
        <taxon>Actinomycetota</taxon>
        <taxon>Actinomycetes</taxon>
        <taxon>Kitasatosporales</taxon>
        <taxon>Streptomycetaceae</taxon>
        <taxon>Streptomyces</taxon>
    </lineage>
</organism>
<comment type="function">
    <text evidence="1">Specifically methylates the guanine in position 1835 (m2G1835) of 23S rRNA.</text>
</comment>
<comment type="catalytic activity">
    <reaction evidence="1">
        <text>guanosine(1835) in 23S rRNA + S-adenosyl-L-methionine = N(2)-methylguanosine(1835) in 23S rRNA + S-adenosyl-L-homocysteine + H(+)</text>
        <dbReference type="Rhea" id="RHEA:42744"/>
        <dbReference type="Rhea" id="RHEA-COMP:10217"/>
        <dbReference type="Rhea" id="RHEA-COMP:10218"/>
        <dbReference type="ChEBI" id="CHEBI:15378"/>
        <dbReference type="ChEBI" id="CHEBI:57856"/>
        <dbReference type="ChEBI" id="CHEBI:59789"/>
        <dbReference type="ChEBI" id="CHEBI:74269"/>
        <dbReference type="ChEBI" id="CHEBI:74481"/>
        <dbReference type="EC" id="2.1.1.174"/>
    </reaction>
</comment>
<comment type="subcellular location">
    <subcellularLocation>
        <location evidence="1">Cytoplasm</location>
    </subcellularLocation>
</comment>
<comment type="similarity">
    <text evidence="1">Belongs to the methyltransferase superfamily. RlmG family.</text>
</comment>
<evidence type="ECO:0000255" key="1">
    <source>
        <dbReference type="HAMAP-Rule" id="MF_01859"/>
    </source>
</evidence>
<proteinExistence type="inferred from homology"/>
<dbReference type="EC" id="2.1.1.174" evidence="1"/>
<dbReference type="EMBL" id="AP009493">
    <property type="protein sequence ID" value="BAG23603.1"/>
    <property type="molecule type" value="Genomic_DNA"/>
</dbReference>
<dbReference type="RefSeq" id="WP_012382204.1">
    <property type="nucleotide sequence ID" value="NC_010572.1"/>
</dbReference>
<dbReference type="SMR" id="B1VMX8"/>
<dbReference type="KEGG" id="sgr:SGR_6774"/>
<dbReference type="PATRIC" id="fig|455632.4.peg.6953"/>
<dbReference type="eggNOG" id="COG2813">
    <property type="taxonomic scope" value="Bacteria"/>
</dbReference>
<dbReference type="HOGENOM" id="CLU_040288_4_0_11"/>
<dbReference type="Proteomes" id="UP000001685">
    <property type="component" value="Chromosome"/>
</dbReference>
<dbReference type="GO" id="GO:0005737">
    <property type="term" value="C:cytoplasm"/>
    <property type="evidence" value="ECO:0007669"/>
    <property type="project" value="UniProtKB-SubCell"/>
</dbReference>
<dbReference type="GO" id="GO:0052916">
    <property type="term" value="F:23S rRNA (guanine(1835)-N(2))-methyltransferase activity"/>
    <property type="evidence" value="ECO:0007669"/>
    <property type="project" value="UniProtKB-EC"/>
</dbReference>
<dbReference type="GO" id="GO:0003676">
    <property type="term" value="F:nucleic acid binding"/>
    <property type="evidence" value="ECO:0007669"/>
    <property type="project" value="InterPro"/>
</dbReference>
<dbReference type="CDD" id="cd02440">
    <property type="entry name" value="AdoMet_MTases"/>
    <property type="match status" value="1"/>
</dbReference>
<dbReference type="Gene3D" id="3.40.50.150">
    <property type="entry name" value="Vaccinia Virus protein VP39"/>
    <property type="match status" value="2"/>
</dbReference>
<dbReference type="HAMAP" id="MF_01859">
    <property type="entry name" value="23SrRNA_methyltr_G"/>
    <property type="match status" value="1"/>
</dbReference>
<dbReference type="InterPro" id="IPR002052">
    <property type="entry name" value="DNA_methylase_N6_adenine_CS"/>
</dbReference>
<dbReference type="InterPro" id="IPR017237">
    <property type="entry name" value="rRNA_m2G-MeTrfase_RlmG"/>
</dbReference>
<dbReference type="InterPro" id="IPR046977">
    <property type="entry name" value="RsmC/RlmG"/>
</dbReference>
<dbReference type="InterPro" id="IPR029063">
    <property type="entry name" value="SAM-dependent_MTases_sf"/>
</dbReference>
<dbReference type="InterPro" id="IPR007848">
    <property type="entry name" value="Small_mtfrase_dom"/>
</dbReference>
<dbReference type="PANTHER" id="PTHR47816:SF5">
    <property type="entry name" value="RIBOSOMAL RNA LARGE SUBUNIT METHYLTRANSFERASE G"/>
    <property type="match status" value="1"/>
</dbReference>
<dbReference type="PANTHER" id="PTHR47816">
    <property type="entry name" value="RIBOSOMAL RNA SMALL SUBUNIT METHYLTRANSFERASE C"/>
    <property type="match status" value="1"/>
</dbReference>
<dbReference type="Pfam" id="PF05175">
    <property type="entry name" value="MTS"/>
    <property type="match status" value="1"/>
</dbReference>
<dbReference type="PIRSF" id="PIRSF037565">
    <property type="entry name" value="RRNA_m2G_Mtase_RsmD_prd"/>
    <property type="match status" value="1"/>
</dbReference>
<dbReference type="SUPFAM" id="SSF53335">
    <property type="entry name" value="S-adenosyl-L-methionine-dependent methyltransferases"/>
    <property type="match status" value="1"/>
</dbReference>
<accession>B1VMX8</accession>
<reference key="1">
    <citation type="journal article" date="2008" name="J. Bacteriol.">
        <title>Genome sequence of the streptomycin-producing microorganism Streptomyces griseus IFO 13350.</title>
        <authorList>
            <person name="Ohnishi Y."/>
            <person name="Ishikawa J."/>
            <person name="Hara H."/>
            <person name="Suzuki H."/>
            <person name="Ikenoya M."/>
            <person name="Ikeda H."/>
            <person name="Yamashita A."/>
            <person name="Hattori M."/>
            <person name="Horinouchi S."/>
        </authorList>
    </citation>
    <scope>NUCLEOTIDE SEQUENCE [LARGE SCALE GENOMIC DNA]</scope>
    <source>
        <strain>JCM 4626 / CBS 651.72 / NBRC 13350 / KCC S-0626 / ISP 5235</strain>
    </source>
</reference>
<keyword id="KW-0963">Cytoplasm</keyword>
<keyword id="KW-0489">Methyltransferase</keyword>
<keyword id="KW-0698">rRNA processing</keyword>
<keyword id="KW-0949">S-adenosyl-L-methionine</keyword>
<keyword id="KW-0808">Transferase</keyword>
<name>RLMG_STRGG</name>